<comment type="subcellular location">
    <subcellularLocation>
        <location evidence="4">Cell membrane</location>
        <topology evidence="4">Single-pass type I membrane protein</topology>
    </subcellularLocation>
</comment>
<comment type="similarity">
    <text evidence="4">Belongs to the RLP family.</text>
</comment>
<comment type="sequence caution" evidence="4">
    <conflict type="erroneous initiation">
        <sequence resource="EMBL-CDS" id="AAC04914"/>
    </conflict>
    <text>Truncated N-terminus.</text>
</comment>
<dbReference type="EMBL" id="AC002334">
    <property type="protein sequence ID" value="AAC04914.1"/>
    <property type="status" value="ALT_INIT"/>
    <property type="molecule type" value="Genomic_DNA"/>
</dbReference>
<dbReference type="EMBL" id="CP002685">
    <property type="protein sequence ID" value="AEC08779.1"/>
    <property type="molecule type" value="Genomic_DNA"/>
</dbReference>
<dbReference type="EMBL" id="AK229332">
    <property type="protein sequence ID" value="BAF01195.1"/>
    <property type="molecule type" value="mRNA"/>
</dbReference>
<dbReference type="PIR" id="H84740">
    <property type="entry name" value="H84740"/>
</dbReference>
<dbReference type="RefSeq" id="NP_180865.2">
    <property type="nucleotide sequence ID" value="NM_128866.4"/>
</dbReference>
<dbReference type="SMR" id="F4IUU1"/>
<dbReference type="FunCoup" id="F4IUU1">
    <property type="interactions" value="23"/>
</dbReference>
<dbReference type="STRING" id="3702.F4IUU1"/>
<dbReference type="GlyCosmos" id="F4IUU1">
    <property type="glycosylation" value="17 sites, No reported glycans"/>
</dbReference>
<dbReference type="GlyGen" id="F4IUU1">
    <property type="glycosylation" value="17 sites"/>
</dbReference>
<dbReference type="PaxDb" id="3702-AT2G33060.1"/>
<dbReference type="ProteomicsDB" id="228112"/>
<dbReference type="EnsemblPlants" id="AT2G33060.1">
    <property type="protein sequence ID" value="AT2G33060.1"/>
    <property type="gene ID" value="AT2G33060"/>
</dbReference>
<dbReference type="GeneID" id="817868"/>
<dbReference type="Gramene" id="AT2G33060.1">
    <property type="protein sequence ID" value="AT2G33060.1"/>
    <property type="gene ID" value="AT2G33060"/>
</dbReference>
<dbReference type="KEGG" id="ath:AT2G33060"/>
<dbReference type="Araport" id="AT2G33060"/>
<dbReference type="TAIR" id="AT2G33060">
    <property type="gene designation" value="RLP27"/>
</dbReference>
<dbReference type="eggNOG" id="KOG0619">
    <property type="taxonomic scope" value="Eukaryota"/>
</dbReference>
<dbReference type="HOGENOM" id="CLU_000288_18_3_1"/>
<dbReference type="InParanoid" id="F4IUU1"/>
<dbReference type="OMA" id="LNCSMLR"/>
<dbReference type="OrthoDB" id="442066at2759"/>
<dbReference type="PRO" id="PR:F4IUU1"/>
<dbReference type="Proteomes" id="UP000006548">
    <property type="component" value="Chromosome 2"/>
</dbReference>
<dbReference type="ExpressionAtlas" id="F4IUU1">
    <property type="expression patterns" value="baseline and differential"/>
</dbReference>
<dbReference type="GO" id="GO:0005886">
    <property type="term" value="C:plasma membrane"/>
    <property type="evidence" value="ECO:0007669"/>
    <property type="project" value="UniProtKB-SubCell"/>
</dbReference>
<dbReference type="FunFam" id="3.80.10.10:FF:000111">
    <property type="entry name" value="LRR receptor-like serine/threonine-protein kinase ERECTA"/>
    <property type="match status" value="1"/>
</dbReference>
<dbReference type="FunFam" id="3.80.10.10:FF:000095">
    <property type="entry name" value="LRR receptor-like serine/threonine-protein kinase GSO1"/>
    <property type="match status" value="1"/>
</dbReference>
<dbReference type="FunFam" id="3.80.10.10:FF:002352">
    <property type="entry name" value="Receptor like protein 28"/>
    <property type="match status" value="1"/>
</dbReference>
<dbReference type="Gene3D" id="3.80.10.10">
    <property type="entry name" value="Ribonuclease Inhibitor"/>
    <property type="match status" value="3"/>
</dbReference>
<dbReference type="InterPro" id="IPR001611">
    <property type="entry name" value="Leu-rich_rpt"/>
</dbReference>
<dbReference type="InterPro" id="IPR003591">
    <property type="entry name" value="Leu-rich_rpt_typical-subtyp"/>
</dbReference>
<dbReference type="InterPro" id="IPR032675">
    <property type="entry name" value="LRR_dom_sf"/>
</dbReference>
<dbReference type="InterPro" id="IPR055414">
    <property type="entry name" value="LRR_R13L4/SHOC2-like"/>
</dbReference>
<dbReference type="InterPro" id="IPR046956">
    <property type="entry name" value="RLP23-like"/>
</dbReference>
<dbReference type="PANTHER" id="PTHR48063">
    <property type="entry name" value="LRR RECEPTOR-LIKE KINASE"/>
    <property type="match status" value="1"/>
</dbReference>
<dbReference type="PANTHER" id="PTHR48063:SF112">
    <property type="entry name" value="RECEPTOR LIKE PROTEIN 30-LIKE"/>
    <property type="match status" value="1"/>
</dbReference>
<dbReference type="Pfam" id="PF00560">
    <property type="entry name" value="LRR_1"/>
    <property type="match status" value="5"/>
</dbReference>
<dbReference type="Pfam" id="PF23598">
    <property type="entry name" value="LRR_14"/>
    <property type="match status" value="1"/>
</dbReference>
<dbReference type="Pfam" id="PF13855">
    <property type="entry name" value="LRR_8"/>
    <property type="match status" value="1"/>
</dbReference>
<dbReference type="PRINTS" id="PR00019">
    <property type="entry name" value="LEURICHRPT"/>
</dbReference>
<dbReference type="SMART" id="SM00365">
    <property type="entry name" value="LRR_SD22"/>
    <property type="match status" value="3"/>
</dbReference>
<dbReference type="SMART" id="SM00369">
    <property type="entry name" value="LRR_TYP"/>
    <property type="match status" value="8"/>
</dbReference>
<dbReference type="SUPFAM" id="SSF52058">
    <property type="entry name" value="L domain-like"/>
    <property type="match status" value="2"/>
</dbReference>
<dbReference type="PROSITE" id="PS51450">
    <property type="entry name" value="LRR"/>
    <property type="match status" value="15"/>
</dbReference>
<organism>
    <name type="scientific">Arabidopsis thaliana</name>
    <name type="common">Mouse-ear cress</name>
    <dbReference type="NCBI Taxonomy" id="3702"/>
    <lineage>
        <taxon>Eukaryota</taxon>
        <taxon>Viridiplantae</taxon>
        <taxon>Streptophyta</taxon>
        <taxon>Embryophyta</taxon>
        <taxon>Tracheophyta</taxon>
        <taxon>Spermatophyta</taxon>
        <taxon>Magnoliopsida</taxon>
        <taxon>eudicotyledons</taxon>
        <taxon>Gunneridae</taxon>
        <taxon>Pentapetalae</taxon>
        <taxon>rosids</taxon>
        <taxon>malvids</taxon>
        <taxon>Brassicales</taxon>
        <taxon>Brassicaceae</taxon>
        <taxon>Camelineae</taxon>
        <taxon>Arabidopsis</taxon>
    </lineage>
</organism>
<sequence>MLFFIKVFMKTILSVLLLFFIFASSFTLVVGLAGCRPDQIQALTQFKNEFDSSDCNQTDYFNGVQCDNKTGVVTKLQLPSGCLHGSMKPNSSLFGLQHLRYLNLSNNNFTSASLPSGFGNLNRLEVLYLSSNGFLGQVPSSFSNLSQLNILDLSHNELTGSFPFVQNLTKLSILVLSYNHFSGTIPSSLLTLPFLSSLDLRENYLTGSIEAPNSSTSSRLEFMYLGNNHFEGQILEPISKLINLKHLDLSFLKTSYPIDLNLFSSFKSLVRLVLSGNSLLATSITSDSKIPLNLENLVLLSCGLIEFPTILKNLTKLEHIDLSNNKIKGKVPEWFWNLPRLRRVNLFNNLFTDLEGSEEVLVNSSVRLLDLAYNHFRGPFPKPPLSINLLSAWNNSFTGNIPLETCNRSSLAILDLSYNNLTGPIPRCLSDFQESLIVVNLRKNNLEGSLPDIFSDGALLRTLDVGYNQLTGKLPRSLLNCSMLRFVSVDHNKIKDTFPFWLKALPDLQALTLRSNKFHGPISPPDRGPLAFPKLRILEISDNNFTGSLPPNYFVNWEASSLQMNEDGRIYMGDYNNPYYIYEDTVDLQYKGLFMEQGKVLTSYATIDFSGNKLEGQIPESIGLLKALIALNLSNNAFTGHIPLSLANVTELESLDLSRNQLSGTIPNGLKTLSFLAYISVAHNQLIGEIPQGTQITGQSKSSFEGNAGLCGLPLQGSCFAPPTPQPKEEDEDEEVLNWKAVVIGYWPGLLLGLIMAHVIASFKPKWLVKIVGPEKRKEDNPVRLFMTLDSRWDSFNNKKNVEQKSDM</sequence>
<gene>
    <name evidence="3" type="primary">RLP27</name>
    <name evidence="5" type="ordered locus">At2g33060</name>
    <name evidence="6" type="ORF">F25I18.20</name>
</gene>
<proteinExistence type="evidence at transcript level"/>
<accession>F4IUU1</accession>
<accession>O49327</accession>
<accession>Q0WNV4</accession>
<reference key="1">
    <citation type="journal article" date="1999" name="Nature">
        <title>Sequence and analysis of chromosome 2 of the plant Arabidopsis thaliana.</title>
        <authorList>
            <person name="Lin X."/>
            <person name="Kaul S."/>
            <person name="Rounsley S.D."/>
            <person name="Shea T.P."/>
            <person name="Benito M.-I."/>
            <person name="Town C.D."/>
            <person name="Fujii C.Y."/>
            <person name="Mason T.M."/>
            <person name="Bowman C.L."/>
            <person name="Barnstead M.E."/>
            <person name="Feldblyum T.V."/>
            <person name="Buell C.R."/>
            <person name="Ketchum K.A."/>
            <person name="Lee J.J."/>
            <person name="Ronning C.M."/>
            <person name="Koo H.L."/>
            <person name="Moffat K.S."/>
            <person name="Cronin L.A."/>
            <person name="Shen M."/>
            <person name="Pai G."/>
            <person name="Van Aken S."/>
            <person name="Umayam L."/>
            <person name="Tallon L.J."/>
            <person name="Gill J.E."/>
            <person name="Adams M.D."/>
            <person name="Carrera A.J."/>
            <person name="Creasy T.H."/>
            <person name="Goodman H.M."/>
            <person name="Somerville C.R."/>
            <person name="Copenhaver G.P."/>
            <person name="Preuss D."/>
            <person name="Nierman W.C."/>
            <person name="White O."/>
            <person name="Eisen J.A."/>
            <person name="Salzberg S.L."/>
            <person name="Fraser C.M."/>
            <person name="Venter J.C."/>
        </authorList>
    </citation>
    <scope>NUCLEOTIDE SEQUENCE [LARGE SCALE GENOMIC DNA]</scope>
    <source>
        <strain>cv. Columbia</strain>
    </source>
</reference>
<reference key="2">
    <citation type="journal article" date="2017" name="Plant J.">
        <title>Araport11: a complete reannotation of the Arabidopsis thaliana reference genome.</title>
        <authorList>
            <person name="Cheng C.Y."/>
            <person name="Krishnakumar V."/>
            <person name="Chan A.P."/>
            <person name="Thibaud-Nissen F."/>
            <person name="Schobel S."/>
            <person name="Town C.D."/>
        </authorList>
    </citation>
    <scope>GENOME REANNOTATION</scope>
    <source>
        <strain>cv. Columbia</strain>
    </source>
</reference>
<reference key="3">
    <citation type="submission" date="2006-07" db="EMBL/GenBank/DDBJ databases">
        <title>Large-scale analysis of RIKEN Arabidopsis full-length (RAFL) cDNAs.</title>
        <authorList>
            <person name="Totoki Y."/>
            <person name="Seki M."/>
            <person name="Ishida J."/>
            <person name="Nakajima M."/>
            <person name="Enju A."/>
            <person name="Kamiya A."/>
            <person name="Narusaka M."/>
            <person name="Shin-i T."/>
            <person name="Nakagawa M."/>
            <person name="Sakamoto N."/>
            <person name="Oishi K."/>
            <person name="Kohara Y."/>
            <person name="Kobayashi M."/>
            <person name="Toyoda A."/>
            <person name="Sakaki Y."/>
            <person name="Sakurai T."/>
            <person name="Iida K."/>
            <person name="Akiyama K."/>
            <person name="Satou M."/>
            <person name="Toyoda T."/>
            <person name="Konagaya A."/>
            <person name="Carninci P."/>
            <person name="Kawai J."/>
            <person name="Hayashizaki Y."/>
            <person name="Shinozaki K."/>
        </authorList>
    </citation>
    <scope>NUCLEOTIDE SEQUENCE [LARGE SCALE MRNA] OF 30-808</scope>
    <source>
        <strain>cv. Columbia</strain>
    </source>
</reference>
<reference key="4">
    <citation type="journal article" date="2005" name="Plant Physiol.">
        <title>Phylogenomic analysis of the receptor-like proteins of rice and Arabidopsis.</title>
        <authorList>
            <person name="Fritz-Laylin L.K."/>
            <person name="Krishnamurthy N."/>
            <person name="Toer M."/>
            <person name="Sjoelander K.V."/>
            <person name="Jones J.D."/>
        </authorList>
    </citation>
    <scope>GENE FAMILY</scope>
</reference>
<reference key="5">
    <citation type="journal article" date="2008" name="Plant Physiol.">
        <title>A genome-wide functional investigation into the roles of receptor-like proteins in Arabidopsis.</title>
        <authorList>
            <person name="Wang G."/>
            <person name="Ellendorff U."/>
            <person name="Kemp B."/>
            <person name="Mansfield J.W."/>
            <person name="Forsyth A."/>
            <person name="Mitchell K."/>
            <person name="Bastas K."/>
            <person name="Liu C.-M."/>
            <person name="Woods-Toer A."/>
            <person name="Zipfel C."/>
            <person name="de Wit P.J.G.M."/>
            <person name="Jones J.D.G."/>
            <person name="Toer M."/>
            <person name="Thomma B.P.H.J."/>
        </authorList>
    </citation>
    <scope>GENE FAMILY</scope>
    <scope>NOMENCLATURE</scope>
</reference>
<protein>
    <recommendedName>
        <fullName evidence="3">Receptor like protein 27</fullName>
        <shortName evidence="3">AtRLP27</shortName>
    </recommendedName>
</protein>
<name>RLP27_ARATH</name>
<keyword id="KW-1003">Cell membrane</keyword>
<keyword id="KW-0325">Glycoprotein</keyword>
<keyword id="KW-0433">Leucine-rich repeat</keyword>
<keyword id="KW-0472">Membrane</keyword>
<keyword id="KW-0675">Receptor</keyword>
<keyword id="KW-1185">Reference proteome</keyword>
<keyword id="KW-0677">Repeat</keyword>
<keyword id="KW-0732">Signal</keyword>
<keyword id="KW-0812">Transmembrane</keyword>
<keyword id="KW-1133">Transmembrane helix</keyword>
<evidence type="ECO:0000255" key="1"/>
<evidence type="ECO:0000255" key="2">
    <source>
        <dbReference type="PROSITE-ProRule" id="PRU00498"/>
    </source>
</evidence>
<evidence type="ECO:0000303" key="3">
    <source>
    </source>
</evidence>
<evidence type="ECO:0000305" key="4"/>
<evidence type="ECO:0000312" key="5">
    <source>
        <dbReference type="Araport" id="AT2G33060"/>
    </source>
</evidence>
<evidence type="ECO:0000312" key="6">
    <source>
        <dbReference type="EMBL" id="AAC04914.1"/>
    </source>
</evidence>
<feature type="signal peptide" evidence="1">
    <location>
        <begin position="1"/>
        <end position="31"/>
    </location>
</feature>
<feature type="chain" id="PRO_0000443808" description="Receptor like protein 27">
    <location>
        <begin position="32"/>
        <end position="808"/>
    </location>
</feature>
<feature type="topological domain" description="Extracellular" evidence="1">
    <location>
        <begin position="32"/>
        <end position="740"/>
    </location>
</feature>
<feature type="transmembrane region" description="Helical" evidence="1">
    <location>
        <begin position="741"/>
        <end position="761"/>
    </location>
</feature>
<feature type="topological domain" description="Cytoplasmic" evidence="1">
    <location>
        <begin position="762"/>
        <end position="808"/>
    </location>
</feature>
<feature type="repeat" description="LRR 1" evidence="1">
    <location>
        <begin position="96"/>
        <end position="120"/>
    </location>
</feature>
<feature type="repeat" description="LRR 2" evidence="1">
    <location>
        <begin position="122"/>
        <end position="144"/>
    </location>
</feature>
<feature type="repeat" description="LRR 3" evidence="1">
    <location>
        <begin position="145"/>
        <end position="170"/>
    </location>
</feature>
<feature type="repeat" description="LRR 4" evidence="1">
    <location>
        <begin position="172"/>
        <end position="192"/>
    </location>
</feature>
<feature type="repeat" description="LRR 5" evidence="1">
    <location>
        <begin position="193"/>
        <end position="218"/>
    </location>
</feature>
<feature type="repeat" description="LRR 6" evidence="1">
    <location>
        <begin position="220"/>
        <end position="241"/>
    </location>
</feature>
<feature type="repeat" description="LRR 7" evidence="1">
    <location>
        <begin position="242"/>
        <end position="265"/>
    </location>
</feature>
<feature type="repeat" description="LRR 8" evidence="1">
    <location>
        <begin position="266"/>
        <end position="291"/>
    </location>
</feature>
<feature type="repeat" description="LRR 9" evidence="1">
    <location>
        <begin position="293"/>
        <end position="314"/>
    </location>
</feature>
<feature type="repeat" description="LRR 10" evidence="1">
    <location>
        <begin position="315"/>
        <end position="338"/>
    </location>
</feature>
<feature type="repeat" description="LRR 11" evidence="1">
    <location>
        <begin position="340"/>
        <end position="363"/>
    </location>
</feature>
<feature type="repeat" description="LRR 12" evidence="1">
    <location>
        <begin position="364"/>
        <end position="387"/>
    </location>
</feature>
<feature type="repeat" description="LRR 13; degenerate" evidence="4">
    <location>
        <begin position="388"/>
        <end position="407"/>
    </location>
</feature>
<feature type="repeat" description="LRR 14" evidence="1">
    <location>
        <begin position="408"/>
        <end position="434"/>
    </location>
</feature>
<feature type="repeat" description="LRR 15" evidence="1">
    <location>
        <begin position="436"/>
        <end position="456"/>
    </location>
</feature>
<feature type="repeat" description="LRR 16" evidence="1">
    <location>
        <begin position="457"/>
        <end position="481"/>
    </location>
</feature>
<feature type="repeat" description="LRR 17" evidence="1">
    <location>
        <begin position="483"/>
        <end position="504"/>
    </location>
</feature>
<feature type="repeat" description="LRR 18" evidence="1">
    <location>
        <begin position="505"/>
        <end position="529"/>
    </location>
</feature>
<feature type="repeat" description="LRR 19" evidence="1">
    <location>
        <begin position="532"/>
        <end position="556"/>
    </location>
</feature>
<feature type="repeat" description="LRR 20" evidence="1">
    <location>
        <begin position="601"/>
        <end position="625"/>
    </location>
</feature>
<feature type="repeat" description="LRR 21" evidence="1">
    <location>
        <begin position="626"/>
        <end position="649"/>
    </location>
</feature>
<feature type="repeat" description="LRR 22" evidence="1">
    <location>
        <begin position="650"/>
        <end position="673"/>
    </location>
</feature>
<feature type="repeat" description="LRR 23" evidence="1">
    <location>
        <begin position="675"/>
        <end position="698"/>
    </location>
</feature>
<feature type="glycosylation site" description="N-linked (GlcNAc...) asparagine" evidence="2">
    <location>
        <position position="56"/>
    </location>
</feature>
<feature type="glycosylation site" description="N-linked (GlcNAc...) asparagine" evidence="2">
    <location>
        <position position="68"/>
    </location>
</feature>
<feature type="glycosylation site" description="N-linked (GlcNAc...) asparagine" evidence="2">
    <location>
        <position position="90"/>
    </location>
</feature>
<feature type="glycosylation site" description="N-linked (GlcNAc...) asparagine" evidence="2">
    <location>
        <position position="103"/>
    </location>
</feature>
<feature type="glycosylation site" description="N-linked (GlcNAc...) asparagine" evidence="2">
    <location>
        <position position="108"/>
    </location>
</feature>
<feature type="glycosylation site" description="N-linked (GlcNAc...) asparagine" evidence="2">
    <location>
        <position position="144"/>
    </location>
</feature>
<feature type="glycosylation site" description="N-linked (GlcNAc...) asparagine" evidence="2">
    <location>
        <position position="167"/>
    </location>
</feature>
<feature type="glycosylation site" description="N-linked (GlcNAc...) asparagine" evidence="2">
    <location>
        <position position="213"/>
    </location>
</feature>
<feature type="glycosylation site" description="N-linked (GlcNAc...) asparagine" evidence="2">
    <location>
        <position position="313"/>
    </location>
</feature>
<feature type="glycosylation site" description="N-linked (GlcNAc...) asparagine" evidence="2">
    <location>
        <position position="363"/>
    </location>
</feature>
<feature type="glycosylation site" description="N-linked (GlcNAc...) asparagine" evidence="2">
    <location>
        <position position="394"/>
    </location>
</feature>
<feature type="glycosylation site" description="N-linked (GlcNAc...) asparagine" evidence="2">
    <location>
        <position position="407"/>
    </location>
</feature>
<feature type="glycosylation site" description="N-linked (GlcNAc...) asparagine" evidence="2">
    <location>
        <position position="420"/>
    </location>
</feature>
<feature type="glycosylation site" description="N-linked (GlcNAc...) asparagine" evidence="2">
    <location>
        <position position="480"/>
    </location>
</feature>
<feature type="glycosylation site" description="N-linked (GlcNAc...) asparagine" evidence="2">
    <location>
        <position position="544"/>
    </location>
</feature>
<feature type="glycosylation site" description="N-linked (GlcNAc...) asparagine" evidence="2">
    <location>
        <position position="632"/>
    </location>
</feature>
<feature type="glycosylation site" description="N-linked (GlcNAc...) asparagine" evidence="2">
    <location>
        <position position="648"/>
    </location>
</feature>
<feature type="sequence conflict" description="In Ref. 3; BAF01195." evidence="4" ref="3">
    <original>R</original>
    <variation>M</variation>
    <location>
        <position position="219"/>
    </location>
</feature>
<feature type="sequence conflict" description="In Ref. 3; BAF01195." evidence="4" ref="3">
    <original>V</original>
    <variation>A</variation>
    <location>
        <position position="600"/>
    </location>
</feature>